<comment type="function">
    <text evidence="1">NAD-binding protein involved in the addition of a carboxymethylaminomethyl (cmnm) group at the wobble position (U34) of certain tRNAs, forming tRNA-cmnm(5)s(2)U34.</text>
</comment>
<comment type="cofactor">
    <cofactor evidence="1">
        <name>FAD</name>
        <dbReference type="ChEBI" id="CHEBI:57692"/>
    </cofactor>
</comment>
<comment type="subunit">
    <text evidence="1">Homodimer. Heterotetramer of two MnmE and two MnmG subunits.</text>
</comment>
<comment type="subcellular location">
    <subcellularLocation>
        <location evidence="1">Cytoplasm</location>
    </subcellularLocation>
</comment>
<comment type="similarity">
    <text evidence="1">Belongs to the MnmG family.</text>
</comment>
<organism>
    <name type="scientific">Cellvibrio japonicus (strain Ueda107)</name>
    <name type="common">Pseudomonas fluorescens subsp. cellulosa</name>
    <dbReference type="NCBI Taxonomy" id="498211"/>
    <lineage>
        <taxon>Bacteria</taxon>
        <taxon>Pseudomonadati</taxon>
        <taxon>Pseudomonadota</taxon>
        <taxon>Gammaproteobacteria</taxon>
        <taxon>Cellvibrionales</taxon>
        <taxon>Cellvibrionaceae</taxon>
        <taxon>Cellvibrio</taxon>
    </lineage>
</organism>
<feature type="chain" id="PRO_1000095648" description="tRNA uridine 5-carboxymethylaminomethyl modification enzyme MnmG">
    <location>
        <begin position="1"/>
        <end position="638"/>
    </location>
</feature>
<feature type="binding site" evidence="1">
    <location>
        <begin position="13"/>
        <end position="18"/>
    </location>
    <ligand>
        <name>FAD</name>
        <dbReference type="ChEBI" id="CHEBI:57692"/>
    </ligand>
</feature>
<feature type="binding site" evidence="1">
    <location>
        <position position="125"/>
    </location>
    <ligand>
        <name>FAD</name>
        <dbReference type="ChEBI" id="CHEBI:57692"/>
    </ligand>
</feature>
<feature type="binding site" evidence="1">
    <location>
        <position position="180"/>
    </location>
    <ligand>
        <name>FAD</name>
        <dbReference type="ChEBI" id="CHEBI:57692"/>
    </ligand>
</feature>
<feature type="binding site" evidence="1">
    <location>
        <begin position="273"/>
        <end position="287"/>
    </location>
    <ligand>
        <name>NAD(+)</name>
        <dbReference type="ChEBI" id="CHEBI:57540"/>
    </ligand>
</feature>
<feature type="binding site" evidence="1">
    <location>
        <position position="370"/>
    </location>
    <ligand>
        <name>FAD</name>
        <dbReference type="ChEBI" id="CHEBI:57692"/>
    </ligand>
</feature>
<accession>B3PIT8</accession>
<sequence length="638" mass="70839">MIYPDRFDVIVIGGGHAGTEACLAAARMGCKTLLLSHNIETLGQMSCNPAIGGIGKSHLVKEIDALGGAMALATDKGGIQFRVLNARKGPAVRATRAQADRILYKAAIRHTLENQPNLWIFQQAVDDLIVEQDQVRGVVTQMGLKFMADQVVLTAGTFLGGLIHIGLENYSGGRAGDPPSIALSRRLRELPLRVDRLKTGTPPRIDARTVNFDLLEKQWGDEPRPVMSVRGNRAMQPPQICCYITHTNERTHEVIRNNLDRSPMYSGVIEGIGPRYCPSIEDKIHRFADKDSHQVFIEPEGLTTHELYPNGISTSLPFDVQLQIVRSMRGFENAHILRPGYAIEYDFFNPQDLQHSLETRVIGGLFFAGQINGTTGYEEAGAQGLLAGINAALRAQGKAAWCPTRDQAYMGVLVDDLITLGTKEPYRMFTSRAEYRLLLREDNADLRLTEKGRELGLIGDEQWQLFCEKREQIALEQQRLKSTWIQAGSAEAEQIEAKINVRLAREYSLMDLLKRPELNYADVASLKGEPLAGEAAAEQVEIEAKYAGYIDRQQDDINRLRAYENTLIPEDLDYAQVEGLSNEVKQKLSAARPQTLARAARISGITPAAISLVLVYLKKRGLLKRLKDDHPVPEQQAG</sequence>
<evidence type="ECO:0000255" key="1">
    <source>
        <dbReference type="HAMAP-Rule" id="MF_00129"/>
    </source>
</evidence>
<name>MNMG_CELJU</name>
<gene>
    <name evidence="1" type="primary">mnmG</name>
    <name evidence="1" type="synonym">gidA</name>
    <name type="ordered locus">CJA_3820</name>
</gene>
<dbReference type="EMBL" id="CP000934">
    <property type="protein sequence ID" value="ACE82856.1"/>
    <property type="molecule type" value="Genomic_DNA"/>
</dbReference>
<dbReference type="RefSeq" id="WP_012489383.1">
    <property type="nucleotide sequence ID" value="NC_010995.1"/>
</dbReference>
<dbReference type="SMR" id="B3PIT8"/>
<dbReference type="STRING" id="498211.CJA_3820"/>
<dbReference type="KEGG" id="cja:CJA_3820"/>
<dbReference type="eggNOG" id="COG0445">
    <property type="taxonomic scope" value="Bacteria"/>
</dbReference>
<dbReference type="HOGENOM" id="CLU_007831_2_2_6"/>
<dbReference type="OrthoDB" id="9815560at2"/>
<dbReference type="Proteomes" id="UP000001036">
    <property type="component" value="Chromosome"/>
</dbReference>
<dbReference type="GO" id="GO:0005829">
    <property type="term" value="C:cytosol"/>
    <property type="evidence" value="ECO:0007669"/>
    <property type="project" value="TreeGrafter"/>
</dbReference>
<dbReference type="GO" id="GO:0050660">
    <property type="term" value="F:flavin adenine dinucleotide binding"/>
    <property type="evidence" value="ECO:0007669"/>
    <property type="project" value="UniProtKB-UniRule"/>
</dbReference>
<dbReference type="GO" id="GO:0030488">
    <property type="term" value="P:tRNA methylation"/>
    <property type="evidence" value="ECO:0007669"/>
    <property type="project" value="TreeGrafter"/>
</dbReference>
<dbReference type="GO" id="GO:0002098">
    <property type="term" value="P:tRNA wobble uridine modification"/>
    <property type="evidence" value="ECO:0007669"/>
    <property type="project" value="InterPro"/>
</dbReference>
<dbReference type="FunFam" id="1.10.10.1800:FF:000001">
    <property type="entry name" value="tRNA uridine 5-carboxymethylaminomethyl modification enzyme MnmG"/>
    <property type="match status" value="1"/>
</dbReference>
<dbReference type="FunFam" id="1.10.150.570:FF:000001">
    <property type="entry name" value="tRNA uridine 5-carboxymethylaminomethyl modification enzyme MnmG"/>
    <property type="match status" value="1"/>
</dbReference>
<dbReference type="FunFam" id="3.50.50.60:FF:000002">
    <property type="entry name" value="tRNA uridine 5-carboxymethylaminomethyl modification enzyme MnmG"/>
    <property type="match status" value="1"/>
</dbReference>
<dbReference type="FunFam" id="3.50.50.60:FF:000010">
    <property type="entry name" value="tRNA uridine 5-carboxymethylaminomethyl modification enzyme MnmG"/>
    <property type="match status" value="1"/>
</dbReference>
<dbReference type="Gene3D" id="3.50.50.60">
    <property type="entry name" value="FAD/NAD(P)-binding domain"/>
    <property type="match status" value="2"/>
</dbReference>
<dbReference type="Gene3D" id="1.10.150.570">
    <property type="entry name" value="GidA associated domain, C-terminal subdomain"/>
    <property type="match status" value="1"/>
</dbReference>
<dbReference type="Gene3D" id="1.10.10.1800">
    <property type="entry name" value="tRNA uridine 5-carboxymethylaminomethyl modification enzyme MnmG/GidA"/>
    <property type="match status" value="1"/>
</dbReference>
<dbReference type="HAMAP" id="MF_00129">
    <property type="entry name" value="MnmG_GidA"/>
    <property type="match status" value="1"/>
</dbReference>
<dbReference type="InterPro" id="IPR036188">
    <property type="entry name" value="FAD/NAD-bd_sf"/>
</dbReference>
<dbReference type="InterPro" id="IPR049312">
    <property type="entry name" value="GIDA_C_N"/>
</dbReference>
<dbReference type="InterPro" id="IPR004416">
    <property type="entry name" value="MnmG"/>
</dbReference>
<dbReference type="InterPro" id="IPR002218">
    <property type="entry name" value="MnmG-rel"/>
</dbReference>
<dbReference type="InterPro" id="IPR020595">
    <property type="entry name" value="MnmG-rel_CS"/>
</dbReference>
<dbReference type="InterPro" id="IPR026904">
    <property type="entry name" value="MnmG_C"/>
</dbReference>
<dbReference type="InterPro" id="IPR047001">
    <property type="entry name" value="MnmG_C_subdom"/>
</dbReference>
<dbReference type="InterPro" id="IPR044920">
    <property type="entry name" value="MnmG_C_subdom_sf"/>
</dbReference>
<dbReference type="InterPro" id="IPR040131">
    <property type="entry name" value="MnmG_N"/>
</dbReference>
<dbReference type="NCBIfam" id="TIGR00136">
    <property type="entry name" value="mnmG_gidA"/>
    <property type="match status" value="1"/>
</dbReference>
<dbReference type="PANTHER" id="PTHR11806">
    <property type="entry name" value="GLUCOSE INHIBITED DIVISION PROTEIN A"/>
    <property type="match status" value="1"/>
</dbReference>
<dbReference type="PANTHER" id="PTHR11806:SF0">
    <property type="entry name" value="PROTEIN MTO1 HOMOLOG, MITOCHONDRIAL"/>
    <property type="match status" value="1"/>
</dbReference>
<dbReference type="Pfam" id="PF01134">
    <property type="entry name" value="GIDA"/>
    <property type="match status" value="1"/>
</dbReference>
<dbReference type="Pfam" id="PF21680">
    <property type="entry name" value="GIDA_C_1st"/>
    <property type="match status" value="1"/>
</dbReference>
<dbReference type="Pfam" id="PF13932">
    <property type="entry name" value="SAM_GIDA_C"/>
    <property type="match status" value="1"/>
</dbReference>
<dbReference type="PRINTS" id="PR00411">
    <property type="entry name" value="PNDRDTASEI"/>
</dbReference>
<dbReference type="SMART" id="SM01228">
    <property type="entry name" value="GIDA_assoc_3"/>
    <property type="match status" value="1"/>
</dbReference>
<dbReference type="SUPFAM" id="SSF51905">
    <property type="entry name" value="FAD/NAD(P)-binding domain"/>
    <property type="match status" value="1"/>
</dbReference>
<dbReference type="PROSITE" id="PS01280">
    <property type="entry name" value="GIDA_1"/>
    <property type="match status" value="1"/>
</dbReference>
<dbReference type="PROSITE" id="PS01281">
    <property type="entry name" value="GIDA_2"/>
    <property type="match status" value="1"/>
</dbReference>
<proteinExistence type="inferred from homology"/>
<keyword id="KW-0963">Cytoplasm</keyword>
<keyword id="KW-0274">FAD</keyword>
<keyword id="KW-0285">Flavoprotein</keyword>
<keyword id="KW-0520">NAD</keyword>
<keyword id="KW-1185">Reference proteome</keyword>
<keyword id="KW-0819">tRNA processing</keyword>
<reference key="1">
    <citation type="journal article" date="2008" name="J. Bacteriol.">
        <title>Insights into plant cell wall degradation from the genome sequence of the soil bacterium Cellvibrio japonicus.</title>
        <authorList>
            <person name="DeBoy R.T."/>
            <person name="Mongodin E.F."/>
            <person name="Fouts D.E."/>
            <person name="Tailford L.E."/>
            <person name="Khouri H."/>
            <person name="Emerson J.B."/>
            <person name="Mohamoud Y."/>
            <person name="Watkins K."/>
            <person name="Henrissat B."/>
            <person name="Gilbert H.J."/>
            <person name="Nelson K.E."/>
        </authorList>
    </citation>
    <scope>NUCLEOTIDE SEQUENCE [LARGE SCALE GENOMIC DNA]</scope>
    <source>
        <strain>Ueda107</strain>
    </source>
</reference>
<protein>
    <recommendedName>
        <fullName evidence="1">tRNA uridine 5-carboxymethylaminomethyl modification enzyme MnmG</fullName>
    </recommendedName>
    <alternativeName>
        <fullName evidence="1">Glucose-inhibited division protein A</fullName>
    </alternativeName>
</protein>